<protein>
    <recommendedName>
        <fullName evidence="1">Proline--tRNA ligase</fullName>
        <ecNumber evidence="1">6.1.1.15</ecNumber>
    </recommendedName>
    <alternativeName>
        <fullName evidence="1">Prolyl-tRNA synthetase</fullName>
        <shortName evidence="1">ProRS</shortName>
    </alternativeName>
</protein>
<sequence>MITRMSELFLRTLRDDPADAEVASHKLLIRAGYIRPVAPGLYSWLPLGLRVLRNIERVIRDEMNAIGGQEILFPALLPRAPYETTNRWTQYGDSVFRLKDRRGNDYLLGPTHEELFTLTVKGEYSSYKDFPLTLYQIQTKYRDEARPRAGILRAREFVMKDSYSFDIDAAGLKAAYRAHREAYQRIFDRLQVRYVIVSAVSGAMGGSASEEFLAESPSGEDAFVRCLESGYTANVEAVVTARPDTLPIDGLPEAVVHDTGDTPTIASLVAWANEADLGRTVTAADTLKNVLIKVRQPGGDTELLAIGVPGDREVDDKRLGAALEPADYALLDDDDFAKHPFLVKGYIGPKALRENNVRYLVDPRIVDGTSWITGADQPGRHVVGLVAGRDFTADGTIEAAEVREGDPSPDGAGPLVMARGIEIGHIFQLGSKYTDAFTADVLGEDGKPVRLTMGSYGIGVSRLVAVVAEQHHDELGLRWPSTVAPFDVHLVIANKDAQARAGATALAADLDRLGVEVLLDDRQASPGVKFKDAELLGMPWIVVVGRGWADGVVELRDRFSGQTRELVAGASLATDIAAAVTG</sequence>
<name>SYP_MYCBO</name>
<organism>
    <name type="scientific">Mycobacterium bovis (strain ATCC BAA-935 / AF2122/97)</name>
    <dbReference type="NCBI Taxonomy" id="233413"/>
    <lineage>
        <taxon>Bacteria</taxon>
        <taxon>Bacillati</taxon>
        <taxon>Actinomycetota</taxon>
        <taxon>Actinomycetes</taxon>
        <taxon>Mycobacteriales</taxon>
        <taxon>Mycobacteriaceae</taxon>
        <taxon>Mycobacterium</taxon>
        <taxon>Mycobacterium tuberculosis complex</taxon>
    </lineage>
</organism>
<dbReference type="EC" id="6.1.1.15" evidence="1"/>
<dbReference type="EMBL" id="LT708304">
    <property type="protein sequence ID" value="SIU01490.1"/>
    <property type="molecule type" value="Genomic_DNA"/>
</dbReference>
<dbReference type="RefSeq" id="NP_856515.1">
    <property type="nucleotide sequence ID" value="NC_002945.3"/>
</dbReference>
<dbReference type="RefSeq" id="WP_010950787.1">
    <property type="nucleotide sequence ID" value="NC_002945.4"/>
</dbReference>
<dbReference type="SMR" id="Q7TXQ5"/>
<dbReference type="KEGG" id="mbo:BQ2027_MB2870C"/>
<dbReference type="PATRIC" id="fig|233413.5.peg.3148"/>
<dbReference type="Proteomes" id="UP000001419">
    <property type="component" value="Chromosome"/>
</dbReference>
<dbReference type="GO" id="GO:0005829">
    <property type="term" value="C:cytosol"/>
    <property type="evidence" value="ECO:0007669"/>
    <property type="project" value="TreeGrafter"/>
</dbReference>
<dbReference type="GO" id="GO:0002161">
    <property type="term" value="F:aminoacyl-tRNA deacylase activity"/>
    <property type="evidence" value="ECO:0007669"/>
    <property type="project" value="InterPro"/>
</dbReference>
<dbReference type="GO" id="GO:0005524">
    <property type="term" value="F:ATP binding"/>
    <property type="evidence" value="ECO:0007669"/>
    <property type="project" value="UniProtKB-UniRule"/>
</dbReference>
<dbReference type="GO" id="GO:0004827">
    <property type="term" value="F:proline-tRNA ligase activity"/>
    <property type="evidence" value="ECO:0007669"/>
    <property type="project" value="UniProtKB-UniRule"/>
</dbReference>
<dbReference type="GO" id="GO:0006433">
    <property type="term" value="P:prolyl-tRNA aminoacylation"/>
    <property type="evidence" value="ECO:0007669"/>
    <property type="project" value="UniProtKB-UniRule"/>
</dbReference>
<dbReference type="CDD" id="cd00861">
    <property type="entry name" value="ProRS_anticodon_short"/>
    <property type="match status" value="1"/>
</dbReference>
<dbReference type="CDD" id="cd00779">
    <property type="entry name" value="ProRS_core_prok"/>
    <property type="match status" value="1"/>
</dbReference>
<dbReference type="FunFam" id="3.30.930.10:FF:000070">
    <property type="entry name" value="Proline--tRNA ligase"/>
    <property type="match status" value="1"/>
</dbReference>
<dbReference type="FunFam" id="3.30.930.10:FF:000120">
    <property type="entry name" value="Proline--tRNA ligase"/>
    <property type="match status" value="1"/>
</dbReference>
<dbReference type="FunFam" id="3.40.50.800:FF:000024">
    <property type="entry name" value="Proline--tRNA ligase"/>
    <property type="match status" value="1"/>
</dbReference>
<dbReference type="FunFam" id="3.90.960.10:FF:000008">
    <property type="entry name" value="Proline--tRNA ligase"/>
    <property type="match status" value="1"/>
</dbReference>
<dbReference type="Gene3D" id="3.40.50.800">
    <property type="entry name" value="Anticodon-binding domain"/>
    <property type="match status" value="1"/>
</dbReference>
<dbReference type="Gene3D" id="3.30.930.10">
    <property type="entry name" value="Bira Bifunctional Protein, Domain 2"/>
    <property type="match status" value="2"/>
</dbReference>
<dbReference type="Gene3D" id="3.90.960.10">
    <property type="entry name" value="YbaK/aminoacyl-tRNA synthetase-associated domain"/>
    <property type="match status" value="1"/>
</dbReference>
<dbReference type="HAMAP" id="MF_01569">
    <property type="entry name" value="Pro_tRNA_synth_type1"/>
    <property type="match status" value="1"/>
</dbReference>
<dbReference type="InterPro" id="IPR002314">
    <property type="entry name" value="aa-tRNA-synt_IIb"/>
</dbReference>
<dbReference type="InterPro" id="IPR006195">
    <property type="entry name" value="aa-tRNA-synth_II"/>
</dbReference>
<dbReference type="InterPro" id="IPR045864">
    <property type="entry name" value="aa-tRNA-synth_II/BPL/LPL"/>
</dbReference>
<dbReference type="InterPro" id="IPR004154">
    <property type="entry name" value="Anticodon-bd"/>
</dbReference>
<dbReference type="InterPro" id="IPR036621">
    <property type="entry name" value="Anticodon-bd_dom_sf"/>
</dbReference>
<dbReference type="InterPro" id="IPR002316">
    <property type="entry name" value="Pro-tRNA-ligase_IIa"/>
</dbReference>
<dbReference type="InterPro" id="IPR004500">
    <property type="entry name" value="Pro-tRNA-synth_IIa_bac-type"/>
</dbReference>
<dbReference type="InterPro" id="IPR023717">
    <property type="entry name" value="Pro-tRNA-Synthase_IIa_type1"/>
</dbReference>
<dbReference type="InterPro" id="IPR050062">
    <property type="entry name" value="Pro-tRNA_synthetase"/>
</dbReference>
<dbReference type="InterPro" id="IPR044140">
    <property type="entry name" value="ProRS_anticodon_short"/>
</dbReference>
<dbReference type="InterPro" id="IPR033730">
    <property type="entry name" value="ProRS_core_prok"/>
</dbReference>
<dbReference type="InterPro" id="IPR036754">
    <property type="entry name" value="YbaK/aa-tRNA-synt-asso_dom_sf"/>
</dbReference>
<dbReference type="InterPro" id="IPR007214">
    <property type="entry name" value="YbaK/aa-tRNA-synth-assoc-dom"/>
</dbReference>
<dbReference type="NCBIfam" id="NF006625">
    <property type="entry name" value="PRK09194.1"/>
    <property type="match status" value="1"/>
</dbReference>
<dbReference type="NCBIfam" id="TIGR00409">
    <property type="entry name" value="proS_fam_II"/>
    <property type="match status" value="1"/>
</dbReference>
<dbReference type="PANTHER" id="PTHR42753">
    <property type="entry name" value="MITOCHONDRIAL RIBOSOME PROTEIN L39/PROLYL-TRNA LIGASE FAMILY MEMBER"/>
    <property type="match status" value="1"/>
</dbReference>
<dbReference type="PANTHER" id="PTHR42753:SF2">
    <property type="entry name" value="PROLINE--TRNA LIGASE"/>
    <property type="match status" value="1"/>
</dbReference>
<dbReference type="Pfam" id="PF03129">
    <property type="entry name" value="HGTP_anticodon"/>
    <property type="match status" value="1"/>
</dbReference>
<dbReference type="Pfam" id="PF00587">
    <property type="entry name" value="tRNA-synt_2b"/>
    <property type="match status" value="1"/>
</dbReference>
<dbReference type="Pfam" id="PF04073">
    <property type="entry name" value="tRNA_edit"/>
    <property type="match status" value="1"/>
</dbReference>
<dbReference type="PRINTS" id="PR01046">
    <property type="entry name" value="TRNASYNTHPRO"/>
</dbReference>
<dbReference type="SUPFAM" id="SSF52954">
    <property type="entry name" value="Class II aaRS ABD-related"/>
    <property type="match status" value="1"/>
</dbReference>
<dbReference type="SUPFAM" id="SSF55681">
    <property type="entry name" value="Class II aaRS and biotin synthetases"/>
    <property type="match status" value="1"/>
</dbReference>
<dbReference type="SUPFAM" id="SSF55826">
    <property type="entry name" value="YbaK/ProRS associated domain"/>
    <property type="match status" value="1"/>
</dbReference>
<dbReference type="PROSITE" id="PS50862">
    <property type="entry name" value="AA_TRNA_LIGASE_II"/>
    <property type="match status" value="1"/>
</dbReference>
<evidence type="ECO:0000255" key="1">
    <source>
        <dbReference type="HAMAP-Rule" id="MF_01569"/>
    </source>
</evidence>
<gene>
    <name evidence="1" type="primary">proS</name>
    <name type="ordered locus">BQ2027_MB2870C</name>
</gene>
<keyword id="KW-0030">Aminoacyl-tRNA synthetase</keyword>
<keyword id="KW-0067">ATP-binding</keyword>
<keyword id="KW-0963">Cytoplasm</keyword>
<keyword id="KW-0436">Ligase</keyword>
<keyword id="KW-0547">Nucleotide-binding</keyword>
<keyword id="KW-0648">Protein biosynthesis</keyword>
<keyword id="KW-1185">Reference proteome</keyword>
<comment type="function">
    <text evidence="1">Catalyzes the attachment of proline to tRNA(Pro) in a two-step reaction: proline is first activated by ATP to form Pro-AMP and then transferred to the acceptor end of tRNA(Pro). As ProRS can inadvertently accommodate and process non-cognate amino acids such as alanine and cysteine, to avoid such errors it has two additional distinct editing activities against alanine. One activity is designated as 'pretransfer' editing and involves the tRNA(Pro)-independent hydrolysis of activated Ala-AMP. The other activity is designated 'posttransfer' editing and involves deacylation of mischarged Ala-tRNA(Pro). The misacylated Cys-tRNA(Pro) is not edited by ProRS.</text>
</comment>
<comment type="catalytic activity">
    <reaction evidence="1">
        <text>tRNA(Pro) + L-proline + ATP = L-prolyl-tRNA(Pro) + AMP + diphosphate</text>
        <dbReference type="Rhea" id="RHEA:14305"/>
        <dbReference type="Rhea" id="RHEA-COMP:9700"/>
        <dbReference type="Rhea" id="RHEA-COMP:9702"/>
        <dbReference type="ChEBI" id="CHEBI:30616"/>
        <dbReference type="ChEBI" id="CHEBI:33019"/>
        <dbReference type="ChEBI" id="CHEBI:60039"/>
        <dbReference type="ChEBI" id="CHEBI:78442"/>
        <dbReference type="ChEBI" id="CHEBI:78532"/>
        <dbReference type="ChEBI" id="CHEBI:456215"/>
        <dbReference type="EC" id="6.1.1.15"/>
    </reaction>
</comment>
<comment type="subunit">
    <text evidence="1">Homodimer.</text>
</comment>
<comment type="subcellular location">
    <subcellularLocation>
        <location evidence="1">Cytoplasm</location>
    </subcellularLocation>
</comment>
<comment type="domain">
    <text evidence="1">Consists of three domains: the N-terminal catalytic domain, the editing domain and the C-terminal anticodon-binding domain.</text>
</comment>
<comment type="similarity">
    <text evidence="1">Belongs to the class-II aminoacyl-tRNA synthetase family. ProS type 1 subfamily.</text>
</comment>
<feature type="chain" id="PRO_0000248724" description="Proline--tRNA ligase">
    <location>
        <begin position="1"/>
        <end position="582"/>
    </location>
</feature>
<reference key="1">
    <citation type="journal article" date="2003" name="Proc. Natl. Acad. Sci. U.S.A.">
        <title>The complete genome sequence of Mycobacterium bovis.</title>
        <authorList>
            <person name="Garnier T."/>
            <person name="Eiglmeier K."/>
            <person name="Camus J.-C."/>
            <person name="Medina N."/>
            <person name="Mansoor H."/>
            <person name="Pryor M."/>
            <person name="Duthoy S."/>
            <person name="Grondin S."/>
            <person name="Lacroix C."/>
            <person name="Monsempe C."/>
            <person name="Simon S."/>
            <person name="Harris B."/>
            <person name="Atkin R."/>
            <person name="Doggett J."/>
            <person name="Mayes R."/>
            <person name="Keating L."/>
            <person name="Wheeler P.R."/>
            <person name="Parkhill J."/>
            <person name="Barrell B.G."/>
            <person name="Cole S.T."/>
            <person name="Gordon S.V."/>
            <person name="Hewinson R.G."/>
        </authorList>
    </citation>
    <scope>NUCLEOTIDE SEQUENCE [LARGE SCALE GENOMIC DNA]</scope>
    <source>
        <strain>ATCC BAA-935 / AF2122/97</strain>
    </source>
</reference>
<reference key="2">
    <citation type="journal article" date="2017" name="Genome Announc.">
        <title>Updated reference genome sequence and annotation of Mycobacterium bovis AF2122/97.</title>
        <authorList>
            <person name="Malone K.M."/>
            <person name="Farrell D."/>
            <person name="Stuber T.P."/>
            <person name="Schubert O.T."/>
            <person name="Aebersold R."/>
            <person name="Robbe-Austerman S."/>
            <person name="Gordon S.V."/>
        </authorList>
    </citation>
    <scope>NUCLEOTIDE SEQUENCE [LARGE SCALE GENOMIC DNA]</scope>
    <scope>GENOME REANNOTATION</scope>
    <source>
        <strain>ATCC BAA-935 / AF2122/97</strain>
    </source>
</reference>
<accession>Q7TXQ5</accession>
<accession>A0A1R3Y2D1</accession>
<accession>X2BMK4</accession>
<proteinExistence type="inferred from homology"/>